<organism>
    <name type="scientific">Kluyveromyces lactis (strain ATCC 8585 / CBS 2359 / DSM 70799 / NBRC 1267 / NRRL Y-1140 / WM37)</name>
    <name type="common">Yeast</name>
    <name type="synonym">Candida sphaerica</name>
    <dbReference type="NCBI Taxonomy" id="284590"/>
    <lineage>
        <taxon>Eukaryota</taxon>
        <taxon>Fungi</taxon>
        <taxon>Dikarya</taxon>
        <taxon>Ascomycota</taxon>
        <taxon>Saccharomycotina</taxon>
        <taxon>Saccharomycetes</taxon>
        <taxon>Saccharomycetales</taxon>
        <taxon>Saccharomycetaceae</taxon>
        <taxon>Kluyveromyces</taxon>
    </lineage>
</organism>
<gene>
    <name type="primary">MIA40</name>
    <name type="synonym">TIM40</name>
    <name type="ordered locus">KLLA0D02706g</name>
</gene>
<accession>Q6CSA1</accession>
<evidence type="ECO:0000250" key="1"/>
<evidence type="ECO:0000255" key="2"/>
<evidence type="ECO:0000255" key="3">
    <source>
        <dbReference type="PROSITE-ProRule" id="PRU01150"/>
    </source>
</evidence>
<evidence type="ECO:0000256" key="4">
    <source>
        <dbReference type="SAM" id="MobiDB-lite"/>
    </source>
</evidence>
<protein>
    <recommendedName>
        <fullName>Mitochondrial intermembrane space import and assembly protein 40</fullName>
    </recommendedName>
    <alternativeName>
        <fullName>Mitochondrial import inner membrane translocase TIM40</fullName>
    </alternativeName>
</protein>
<feature type="transit peptide" description="Mitochondrion" evidence="2">
    <location>
        <begin position="1"/>
        <end position="23"/>
    </location>
</feature>
<feature type="chain" id="PRO_0000235291" description="Mitochondrial intermembrane space import and assembly protein 40">
    <location>
        <begin position="24"/>
        <end position="406"/>
    </location>
</feature>
<feature type="topological domain" description="Mitochondrial matrix" evidence="2">
    <location>
        <begin position="24"/>
        <end position="37"/>
    </location>
</feature>
<feature type="transmembrane region" description="Helical; Signal-anchor for type II membrane protein" evidence="2">
    <location>
        <begin position="38"/>
        <end position="54"/>
    </location>
</feature>
<feature type="topological domain" description="Mitochondrial intermembrane" evidence="2">
    <location>
        <begin position="55"/>
        <end position="406"/>
    </location>
</feature>
<feature type="domain" description="CHCH" evidence="3">
    <location>
        <begin position="290"/>
        <end position="334"/>
    </location>
</feature>
<feature type="region of interest" description="Disordered" evidence="4">
    <location>
        <begin position="67"/>
        <end position="110"/>
    </location>
</feature>
<feature type="region of interest" description="Disordered" evidence="4">
    <location>
        <begin position="142"/>
        <end position="276"/>
    </location>
</feature>
<feature type="region of interest" description="Disordered" evidence="4">
    <location>
        <begin position="341"/>
        <end position="365"/>
    </location>
</feature>
<feature type="region of interest" description="Disordered" evidence="4">
    <location>
        <begin position="384"/>
        <end position="406"/>
    </location>
</feature>
<feature type="short sequence motif" description="Cx9C motif 1" evidence="3">
    <location>
        <begin position="293"/>
        <end position="303"/>
    </location>
</feature>
<feature type="short sequence motif" description="Cx9C motif 2" evidence="3">
    <location>
        <begin position="316"/>
        <end position="326"/>
    </location>
</feature>
<feature type="compositionally biased region" description="Basic and acidic residues" evidence="4">
    <location>
        <begin position="205"/>
        <end position="224"/>
    </location>
</feature>
<feature type="compositionally biased region" description="Low complexity" evidence="4">
    <location>
        <begin position="242"/>
        <end position="260"/>
    </location>
</feature>
<feature type="compositionally biased region" description="Low complexity" evidence="4">
    <location>
        <begin position="356"/>
        <end position="365"/>
    </location>
</feature>
<feature type="compositionally biased region" description="Basic and acidic residues" evidence="4">
    <location>
        <begin position="384"/>
        <end position="393"/>
    </location>
</feature>
<feature type="disulfide bond" description="Redox-active" evidence="1">
    <location>
        <begin position="282"/>
        <end position="284"/>
    </location>
</feature>
<feature type="disulfide bond" evidence="3">
    <location>
        <begin position="293"/>
        <end position="326"/>
    </location>
</feature>
<feature type="disulfide bond" evidence="3">
    <location>
        <begin position="303"/>
        <end position="316"/>
    </location>
</feature>
<dbReference type="EMBL" id="CR382124">
    <property type="protein sequence ID" value="CAH00284.1"/>
    <property type="molecule type" value="Genomic_DNA"/>
</dbReference>
<dbReference type="RefSeq" id="XP_453188.1">
    <property type="nucleotide sequence ID" value="XM_453188.1"/>
</dbReference>
<dbReference type="SMR" id="Q6CSA1"/>
<dbReference type="STRING" id="284590.Q6CSA1"/>
<dbReference type="PaxDb" id="284590-Q6CSA1"/>
<dbReference type="KEGG" id="kla:KLLA0_D02706g"/>
<dbReference type="eggNOG" id="KOG4149">
    <property type="taxonomic scope" value="Eukaryota"/>
</dbReference>
<dbReference type="HOGENOM" id="CLU_678048_0_0_1"/>
<dbReference type="InParanoid" id="Q6CSA1"/>
<dbReference type="Proteomes" id="UP000000598">
    <property type="component" value="Chromosome D"/>
</dbReference>
<dbReference type="GO" id="GO:0005743">
    <property type="term" value="C:mitochondrial inner membrane"/>
    <property type="evidence" value="ECO:0007669"/>
    <property type="project" value="UniProtKB-SubCell"/>
</dbReference>
<dbReference type="GO" id="GO:0005758">
    <property type="term" value="C:mitochondrial intermembrane space"/>
    <property type="evidence" value="ECO:0007669"/>
    <property type="project" value="TreeGrafter"/>
</dbReference>
<dbReference type="GO" id="GO:0015035">
    <property type="term" value="F:protein-disulfide reductase activity"/>
    <property type="evidence" value="ECO:0007669"/>
    <property type="project" value="InterPro"/>
</dbReference>
<dbReference type="GO" id="GO:0045041">
    <property type="term" value="P:protein import into mitochondrial intermembrane space"/>
    <property type="evidence" value="ECO:0007669"/>
    <property type="project" value="InterPro"/>
</dbReference>
<dbReference type="Gene3D" id="1.10.287.2900">
    <property type="match status" value="1"/>
</dbReference>
<dbReference type="InterPro" id="IPR039289">
    <property type="entry name" value="CHCHD4"/>
</dbReference>
<dbReference type="InterPro" id="IPR012891">
    <property type="entry name" value="GCK_dom"/>
</dbReference>
<dbReference type="PANTHER" id="PTHR21622">
    <property type="entry name" value="COILED-COIL-HELIX-COILED-COIL-HELIX DOMAIN CONTAINING 4"/>
    <property type="match status" value="1"/>
</dbReference>
<dbReference type="PANTHER" id="PTHR21622:SF0">
    <property type="entry name" value="COILED-COIL-HELIX-COILED-COIL-HELIX DOMAIN CONTAINING 4"/>
    <property type="match status" value="1"/>
</dbReference>
<dbReference type="SMART" id="SM01227">
    <property type="entry name" value="GCK"/>
    <property type="match status" value="1"/>
</dbReference>
<dbReference type="PROSITE" id="PS51808">
    <property type="entry name" value="CHCH"/>
    <property type="match status" value="1"/>
</dbReference>
<comment type="function">
    <text evidence="1">Required for the import and folding of small cysteine-containing proteins (small Tim) in the mitochondrial intermembrane space (IMS). Forms a redox cycle with ERV1 that involves a disulfide relay system. Precursor proteins to be imported into the IMS are translocated in their reduced form into the mitochondria. The oxidized form of MIA40 forms a transient intermolecular disulfide bridge with the reduced precursor protein, resulting in oxidation of the precursor protein that now contains an intramolecular disulfide bond and is able to undergo folding in the IMS (By similarity).</text>
</comment>
<comment type="cofactor">
    <cofactor evidence="1">
        <name>Cu(2+)</name>
        <dbReference type="ChEBI" id="CHEBI:29036"/>
    </cofactor>
    <cofactor evidence="1">
        <name>Zn(2+)</name>
        <dbReference type="ChEBI" id="CHEBI:29105"/>
    </cofactor>
    <text evidence="1">Cu(2+) or Zn(2+).</text>
</comment>
<comment type="subunit">
    <text evidence="1">Monomer.</text>
</comment>
<comment type="subcellular location">
    <subcellularLocation>
        <location evidence="1">Mitochondrion inner membrane</location>
        <topology evidence="1">Single-pass type II membrane protein</topology>
        <orientation evidence="1">Intermembrane side</orientation>
    </subcellularLocation>
</comment>
<comment type="domain">
    <text evidence="1">The CHCH domain contains a conserved twin Cys-X(9)-Cys motif which is required for import and stability of MIA40 in mitochondria.</text>
</comment>
<sequence length="406" mass="43212">MFRVSLQATRRVAFRSARQIRFYSAHPPSGGVSHMNKPALLLAGFSTLGAIYVADGCPTLIERKPAPAEKPAEETPAAGQSQSISEPTKDADESPVSAQEEGAEPVTTPENEITYSEETHQALAATLSGDEPAAIEPVAESVNEQATEPAASGEATNEPVTGISEDTKAPSLSFDDSKTAKGVVLEDEADKKEIQQTSPDAVKTASKDGSEGESDVVLHEKSPAEAETITEAEEQAEIRSISGGTAEQSATAAAAAAGVQGEKKNEQQTAYNPETGEINWDCPCLGGMAYGPCGEEFKSAFSCFVYSEADPKGINCVEKFSTMQNCFRKYPDYYAEQIKDEEEASAEASKIEDKSTTPVSTATSTVEVQTENAVFEPVLEKYVEENPQLKDTPEAAAVTNTDDEKK</sequence>
<reference key="1">
    <citation type="journal article" date="2004" name="Nature">
        <title>Genome evolution in yeasts.</title>
        <authorList>
            <person name="Dujon B."/>
            <person name="Sherman D."/>
            <person name="Fischer G."/>
            <person name="Durrens P."/>
            <person name="Casaregola S."/>
            <person name="Lafontaine I."/>
            <person name="de Montigny J."/>
            <person name="Marck C."/>
            <person name="Neuveglise C."/>
            <person name="Talla E."/>
            <person name="Goffard N."/>
            <person name="Frangeul L."/>
            <person name="Aigle M."/>
            <person name="Anthouard V."/>
            <person name="Babour A."/>
            <person name="Barbe V."/>
            <person name="Barnay S."/>
            <person name="Blanchin S."/>
            <person name="Beckerich J.-M."/>
            <person name="Beyne E."/>
            <person name="Bleykasten C."/>
            <person name="Boisrame A."/>
            <person name="Boyer J."/>
            <person name="Cattolico L."/>
            <person name="Confanioleri F."/>
            <person name="de Daruvar A."/>
            <person name="Despons L."/>
            <person name="Fabre E."/>
            <person name="Fairhead C."/>
            <person name="Ferry-Dumazet H."/>
            <person name="Groppi A."/>
            <person name="Hantraye F."/>
            <person name="Hennequin C."/>
            <person name="Jauniaux N."/>
            <person name="Joyet P."/>
            <person name="Kachouri R."/>
            <person name="Kerrest A."/>
            <person name="Koszul R."/>
            <person name="Lemaire M."/>
            <person name="Lesur I."/>
            <person name="Ma L."/>
            <person name="Muller H."/>
            <person name="Nicaud J.-M."/>
            <person name="Nikolski M."/>
            <person name="Oztas S."/>
            <person name="Ozier-Kalogeropoulos O."/>
            <person name="Pellenz S."/>
            <person name="Potier S."/>
            <person name="Richard G.-F."/>
            <person name="Straub M.-L."/>
            <person name="Suleau A."/>
            <person name="Swennen D."/>
            <person name="Tekaia F."/>
            <person name="Wesolowski-Louvel M."/>
            <person name="Westhof E."/>
            <person name="Wirth B."/>
            <person name="Zeniou-Meyer M."/>
            <person name="Zivanovic Y."/>
            <person name="Bolotin-Fukuhara M."/>
            <person name="Thierry A."/>
            <person name="Bouchier C."/>
            <person name="Caudron B."/>
            <person name="Scarpelli C."/>
            <person name="Gaillardin C."/>
            <person name="Weissenbach J."/>
            <person name="Wincker P."/>
            <person name="Souciet J.-L."/>
        </authorList>
    </citation>
    <scope>NUCLEOTIDE SEQUENCE [LARGE SCALE GENOMIC DNA]</scope>
    <source>
        <strain>ATCC 8585 / CBS 2359 / DSM 70799 / NBRC 1267 / NRRL Y-1140 / WM37</strain>
    </source>
</reference>
<name>MIA40_KLULA</name>
<proteinExistence type="inferred from homology"/>
<keyword id="KW-1015">Disulfide bond</keyword>
<keyword id="KW-0472">Membrane</keyword>
<keyword id="KW-0496">Mitochondrion</keyword>
<keyword id="KW-0999">Mitochondrion inner membrane</keyword>
<keyword id="KW-0560">Oxidoreductase</keyword>
<keyword id="KW-0653">Protein transport</keyword>
<keyword id="KW-0676">Redox-active center</keyword>
<keyword id="KW-1185">Reference proteome</keyword>
<keyword id="KW-0735">Signal-anchor</keyword>
<keyword id="KW-0809">Transit peptide</keyword>
<keyword id="KW-0811">Translocation</keyword>
<keyword id="KW-0812">Transmembrane</keyword>
<keyword id="KW-1133">Transmembrane helix</keyword>
<keyword id="KW-0813">Transport</keyword>